<evidence type="ECO:0000255" key="1">
    <source>
        <dbReference type="HAMAP-Rule" id="MF_01398"/>
    </source>
</evidence>
<proteinExistence type="inferred from homology"/>
<dbReference type="EMBL" id="CP000412">
    <property type="protein sequence ID" value="ABJ58265.1"/>
    <property type="molecule type" value="Genomic_DNA"/>
</dbReference>
<dbReference type="RefSeq" id="WP_003619103.1">
    <property type="nucleotide sequence ID" value="NC_008529.1"/>
</dbReference>
<dbReference type="SMR" id="Q04BA7"/>
<dbReference type="KEGG" id="lbu:LBUL_0639"/>
<dbReference type="HOGENOM" id="CLU_079215_4_2_9"/>
<dbReference type="BioCyc" id="LDEL321956:LBUL_RS03040-MONOMER"/>
<dbReference type="GO" id="GO:0005886">
    <property type="term" value="C:plasma membrane"/>
    <property type="evidence" value="ECO:0007669"/>
    <property type="project" value="UniProtKB-SubCell"/>
</dbReference>
<dbReference type="GO" id="GO:0045259">
    <property type="term" value="C:proton-transporting ATP synthase complex"/>
    <property type="evidence" value="ECO:0007669"/>
    <property type="project" value="UniProtKB-KW"/>
</dbReference>
<dbReference type="GO" id="GO:0046933">
    <property type="term" value="F:proton-transporting ATP synthase activity, rotational mechanism"/>
    <property type="evidence" value="ECO:0007669"/>
    <property type="project" value="UniProtKB-UniRule"/>
</dbReference>
<dbReference type="GO" id="GO:0046961">
    <property type="term" value="F:proton-transporting ATPase activity, rotational mechanism"/>
    <property type="evidence" value="ECO:0007669"/>
    <property type="project" value="TreeGrafter"/>
</dbReference>
<dbReference type="CDD" id="cd06503">
    <property type="entry name" value="ATP-synt_Fo_b"/>
    <property type="match status" value="1"/>
</dbReference>
<dbReference type="HAMAP" id="MF_01398">
    <property type="entry name" value="ATP_synth_b_bprime"/>
    <property type="match status" value="1"/>
</dbReference>
<dbReference type="InterPro" id="IPR002146">
    <property type="entry name" value="ATP_synth_b/b'su_bac/chlpt"/>
</dbReference>
<dbReference type="InterPro" id="IPR005864">
    <property type="entry name" value="ATP_synth_F0_bsu_bac"/>
</dbReference>
<dbReference type="InterPro" id="IPR050059">
    <property type="entry name" value="ATP_synthase_B_chain"/>
</dbReference>
<dbReference type="NCBIfam" id="TIGR01144">
    <property type="entry name" value="ATP_synt_b"/>
    <property type="match status" value="1"/>
</dbReference>
<dbReference type="PANTHER" id="PTHR33445:SF1">
    <property type="entry name" value="ATP SYNTHASE SUBUNIT B"/>
    <property type="match status" value="1"/>
</dbReference>
<dbReference type="PANTHER" id="PTHR33445">
    <property type="entry name" value="ATP SYNTHASE SUBUNIT B', CHLOROPLASTIC"/>
    <property type="match status" value="1"/>
</dbReference>
<dbReference type="Pfam" id="PF00430">
    <property type="entry name" value="ATP-synt_B"/>
    <property type="match status" value="1"/>
</dbReference>
<gene>
    <name evidence="1" type="primary">atpF</name>
    <name type="ordered locus">LBUL_0639</name>
</gene>
<accession>Q04BA7</accession>
<reference key="1">
    <citation type="journal article" date="2006" name="Proc. Natl. Acad. Sci. U.S.A.">
        <title>Comparative genomics of the lactic acid bacteria.</title>
        <authorList>
            <person name="Makarova K.S."/>
            <person name="Slesarev A."/>
            <person name="Wolf Y.I."/>
            <person name="Sorokin A."/>
            <person name="Mirkin B."/>
            <person name="Koonin E.V."/>
            <person name="Pavlov A."/>
            <person name="Pavlova N."/>
            <person name="Karamychev V."/>
            <person name="Polouchine N."/>
            <person name="Shakhova V."/>
            <person name="Grigoriev I."/>
            <person name="Lou Y."/>
            <person name="Rohksar D."/>
            <person name="Lucas S."/>
            <person name="Huang K."/>
            <person name="Goodstein D.M."/>
            <person name="Hawkins T."/>
            <person name="Plengvidhya V."/>
            <person name="Welker D."/>
            <person name="Hughes J."/>
            <person name="Goh Y."/>
            <person name="Benson A."/>
            <person name="Baldwin K."/>
            <person name="Lee J.-H."/>
            <person name="Diaz-Muniz I."/>
            <person name="Dosti B."/>
            <person name="Smeianov V."/>
            <person name="Wechter W."/>
            <person name="Barabote R."/>
            <person name="Lorca G."/>
            <person name="Altermann E."/>
            <person name="Barrangou R."/>
            <person name="Ganesan B."/>
            <person name="Xie Y."/>
            <person name="Rawsthorne H."/>
            <person name="Tamir D."/>
            <person name="Parker C."/>
            <person name="Breidt F."/>
            <person name="Broadbent J.R."/>
            <person name="Hutkins R."/>
            <person name="O'Sullivan D."/>
            <person name="Steele J."/>
            <person name="Unlu G."/>
            <person name="Saier M.H. Jr."/>
            <person name="Klaenhammer T."/>
            <person name="Richardson P."/>
            <person name="Kozyavkin S."/>
            <person name="Weimer B.C."/>
            <person name="Mills D.A."/>
        </authorList>
    </citation>
    <scope>NUCLEOTIDE SEQUENCE [LARGE SCALE GENOMIC DNA]</scope>
    <source>
        <strain>ATCC BAA-365 / Lb-18</strain>
    </source>
</reference>
<feature type="chain" id="PRO_0000368542" description="ATP synthase subunit b">
    <location>
        <begin position="1"/>
        <end position="168"/>
    </location>
</feature>
<feature type="transmembrane region" description="Helical" evidence="1">
    <location>
        <begin position="11"/>
        <end position="31"/>
    </location>
</feature>
<comment type="function">
    <text evidence="1">F(1)F(0) ATP synthase produces ATP from ADP in the presence of a proton or sodium gradient. F-type ATPases consist of two structural domains, F(1) containing the extramembraneous catalytic core and F(0) containing the membrane proton channel, linked together by a central stalk and a peripheral stalk. During catalysis, ATP synthesis in the catalytic domain of F(1) is coupled via a rotary mechanism of the central stalk subunits to proton translocation.</text>
</comment>
<comment type="function">
    <text evidence="1">Component of the F(0) channel, it forms part of the peripheral stalk, linking F(1) to F(0).</text>
</comment>
<comment type="subunit">
    <text evidence="1">F-type ATPases have 2 components, F(1) - the catalytic core - and F(0) - the membrane proton channel. F(1) has five subunits: alpha(3), beta(3), gamma(1), delta(1), epsilon(1). F(0) has three main subunits: a(1), b(2) and c(10-14). The alpha and beta chains form an alternating ring which encloses part of the gamma chain. F(1) is attached to F(0) by a central stalk formed by the gamma and epsilon chains, while a peripheral stalk is formed by the delta and b chains.</text>
</comment>
<comment type="subcellular location">
    <subcellularLocation>
        <location evidence="1">Cell membrane</location>
        <topology evidence="1">Single-pass membrane protein</topology>
    </subcellularLocation>
</comment>
<comment type="similarity">
    <text evidence="1">Belongs to the ATPase B chain family.</text>
</comment>
<name>ATPF_LACDB</name>
<keyword id="KW-0066">ATP synthesis</keyword>
<keyword id="KW-1003">Cell membrane</keyword>
<keyword id="KW-0138">CF(0)</keyword>
<keyword id="KW-0375">Hydrogen ion transport</keyword>
<keyword id="KW-0406">Ion transport</keyword>
<keyword id="KW-0472">Membrane</keyword>
<keyword id="KW-0812">Transmembrane</keyword>
<keyword id="KW-1133">Transmembrane helix</keyword>
<keyword id="KW-0813">Transport</keyword>
<organism>
    <name type="scientific">Lactobacillus delbrueckii subsp. bulgaricus (strain ATCC BAA-365 / Lb-18)</name>
    <dbReference type="NCBI Taxonomy" id="321956"/>
    <lineage>
        <taxon>Bacteria</taxon>
        <taxon>Bacillati</taxon>
        <taxon>Bacillota</taxon>
        <taxon>Bacilli</taxon>
        <taxon>Lactobacillales</taxon>
        <taxon>Lactobacillaceae</taxon>
        <taxon>Lactobacillus</taxon>
    </lineage>
</organism>
<sequence length="168" mass="18519">MEFQPVFAGAEISIINTLWYLIVFSILLLAVKHYAWGPVKDMMEKRRQKVIDDLDQAASDRKKAETLANEREAALKNSRQEATQILSDAKSNAQKTGKQIVSEAMAEASAIREKAKADAAQAETDALNEAREEVADLSVTIAEKVIAKNLSAADQKDLVDQFIKGLND</sequence>
<protein>
    <recommendedName>
        <fullName evidence="1">ATP synthase subunit b</fullName>
    </recommendedName>
    <alternativeName>
        <fullName evidence="1">ATP synthase F(0) sector subunit b</fullName>
    </alternativeName>
    <alternativeName>
        <fullName evidence="1">ATPase subunit I</fullName>
    </alternativeName>
    <alternativeName>
        <fullName evidence="1">F-type ATPase subunit b</fullName>
        <shortName evidence="1">F-ATPase subunit b</shortName>
    </alternativeName>
</protein>